<proteinExistence type="evidence at transcript level"/>
<organism>
    <name type="scientific">Arabidopsis thaliana</name>
    <name type="common">Mouse-ear cress</name>
    <dbReference type="NCBI Taxonomy" id="3702"/>
    <lineage>
        <taxon>Eukaryota</taxon>
        <taxon>Viridiplantae</taxon>
        <taxon>Streptophyta</taxon>
        <taxon>Embryophyta</taxon>
        <taxon>Tracheophyta</taxon>
        <taxon>Spermatophyta</taxon>
        <taxon>Magnoliopsida</taxon>
        <taxon>eudicotyledons</taxon>
        <taxon>Gunneridae</taxon>
        <taxon>Pentapetalae</taxon>
        <taxon>rosids</taxon>
        <taxon>malvids</taxon>
        <taxon>Brassicales</taxon>
        <taxon>Brassicaceae</taxon>
        <taxon>Camelineae</taxon>
        <taxon>Arabidopsis</taxon>
    </lineage>
</organism>
<sequence length="1093" mass="123008">MSSFFKSFAGNPREAAAMAMVQSSSYRVLSGKSCSNLRRNTPLDSFLAKGRSSVKAFSFLYVSRFSTEPNNEFGHSSKRRSRGPVMAAKKASEGEKQEDGKYKQTVDLPKTGFGMRANSLTREPELQKLWEENQVFKRVSDNNNGGSFILHDGPPYANGDLHMGHALNKILKDIINRYKLLQNYKVQYVPGWDCHGLPIELKVLQSLDQEVRKELTPLKLRAKAAKFAKATVKTQMESFKRFGVWADWNNPYLTLDPEYEAAQIEVFGQMALKGYIYRGRKPVHWSPSSRTALAEAELEYPEGHISKSIYAIFKLVGGAKTSLLDEFIPNIYLAVWTTTPWTMPANAAVAVNAKLQYSVVEVQSFSEDESTVTSNKKKIPGKVLKNQQKLFVIVATDLVPALEAKWGVKLSISKTFLGSDLENCRYTHPIDNRDCPVVIGGDYITTESGTGLVHTAPGHGQEDYATGLKYGLPLVSPVDDEGKFTEEAGQFRGLSVLGEGNTAVVSYLDENMSLVMEESYAHKYPYDWRTKKPTIFRATEQWFASVEGFRTATMDAINNVKWVPHQAVNRISAMTSSRSDWCISRQRTWGVPIPAFYHVKTKEPLMNEETINHVKSIISQKGSDAWWYMSVEDLLPEKYRDKAADYEKGTDTMDVWFDSGSSWAGVLGKREGLSFPADVYLEGTDQHRGWFQSSLLTSIATQGKAPYSAVITHGFVLDEKGMKMSKSLGNVVDPRLVIEGGKNSKDAPAYGADVMRLWVSSVDYTGDVLIGPQILRQMSDIYRKLRGTLRYLLGNLHDWRVDNAVPYQDLPIIDQHALFQLENVVKNIQECYENYQFFKIFQIIQRFTIVDLSNFYFDIAKDRLYTGGTSSFTRRSCQTVLSTHLLSILRVIAPIVPHLAEDVWQNLPFEYRNEDGSAAEFVFELKWPTLNEQWLSFPAEDVLFWQRLLELRTEVNKVLELARNEKMIGSSLEAKVYLHTADAGMAAKLLEMSEAKNEADTLQRIFITSQVEVLSSMEKEMISSVQHTGEYVEGENKVWIGVSRAEGSKCERCWNYSGQVGSFSDHPTLCGRCFSVIVANPPEPAVAAVNSLA</sequence>
<feature type="transit peptide" description="Chloroplast and mitochondrion" evidence="7">
    <location>
        <begin position="1"/>
        <end status="unknown"/>
    </location>
</feature>
<feature type="chain" id="PRO_0000433537" description="Isoleucine--tRNA ligase, chloroplastic/mitochondrial" evidence="7">
    <location>
        <begin status="unknown"/>
        <end position="1093"/>
    </location>
</feature>
<feature type="region of interest" description="Disordered" evidence="3">
    <location>
        <begin position="69"/>
        <end position="103"/>
    </location>
</feature>
<feature type="short sequence motif" description="'HIGH' region" evidence="7">
    <location>
        <begin position="155"/>
        <end position="165"/>
    </location>
</feature>
<feature type="short sequence motif" description="'KMSKS' region" evidence="7">
    <location>
        <begin position="723"/>
        <end position="727"/>
    </location>
</feature>
<feature type="compositionally biased region" description="Basic and acidic residues" evidence="3">
    <location>
        <begin position="90"/>
        <end position="103"/>
    </location>
</feature>
<feature type="binding site" evidence="2">
    <location>
        <position position="682"/>
    </location>
    <ligand>
        <name>L-isoleucyl-5'-AMP</name>
        <dbReference type="ChEBI" id="CHEBI:178002"/>
    </ligand>
</feature>
<feature type="binding site" evidence="1">
    <location>
        <position position="726"/>
    </location>
    <ligand>
        <name>ATP</name>
        <dbReference type="ChEBI" id="CHEBI:30616"/>
    </ligand>
</feature>
<feature type="binding site" evidence="2">
    <location>
        <position position="1050"/>
    </location>
    <ligand>
        <name>Zn(2+)</name>
        <dbReference type="ChEBI" id="CHEBI:29105"/>
    </ligand>
</feature>
<feature type="binding site" evidence="2">
    <location>
        <position position="1053"/>
    </location>
    <ligand>
        <name>Zn(2+)</name>
        <dbReference type="ChEBI" id="CHEBI:29105"/>
    </ligand>
</feature>
<feature type="binding site" evidence="2">
    <location>
        <position position="1070"/>
    </location>
    <ligand>
        <name>Zn(2+)</name>
        <dbReference type="ChEBI" id="CHEBI:29105"/>
    </ligand>
</feature>
<feature type="binding site" evidence="2">
    <location>
        <position position="1073"/>
    </location>
    <ligand>
        <name>Zn(2+)</name>
        <dbReference type="ChEBI" id="CHEBI:29105"/>
    </ligand>
</feature>
<feature type="splice variant" id="VSP_057806" description="In isoform 2.">
    <original>LRTEV</original>
    <variation>VSKLS</variation>
    <location>
        <begin position="951"/>
        <end position="955"/>
    </location>
</feature>
<feature type="splice variant" id="VSP_057807" description="In isoform 2.">
    <location>
        <begin position="956"/>
        <end position="1093"/>
    </location>
</feature>
<feature type="sequence conflict" description="In Ref. 4; BAH19412." evidence="7" ref="4">
    <original>K</original>
    <variation>M</variation>
    <location>
        <position position="223"/>
    </location>
</feature>
<feature type="sequence conflict" description="In Ref. 4; BAH19412." evidence="7" ref="4">
    <original>P</original>
    <variation>T</variation>
    <location>
        <position position="257"/>
    </location>
</feature>
<evidence type="ECO:0000250" key="1"/>
<evidence type="ECO:0000250" key="2">
    <source>
        <dbReference type="UniProtKB" id="P41972"/>
    </source>
</evidence>
<evidence type="ECO:0000256" key="3">
    <source>
        <dbReference type="SAM" id="MobiDB-lite"/>
    </source>
</evidence>
<evidence type="ECO:0000269" key="4">
    <source>
    </source>
</evidence>
<evidence type="ECO:0000269" key="5">
    <source>
    </source>
</evidence>
<evidence type="ECO:0000303" key="6">
    <source>
    </source>
</evidence>
<evidence type="ECO:0000305" key="7"/>
<evidence type="ECO:0000312" key="8">
    <source>
        <dbReference type="Araport" id="AT5G49030"/>
    </source>
</evidence>
<evidence type="ECO:0000312" key="9">
    <source>
        <dbReference type="EMBL" id="BAB10327.1"/>
    </source>
</evidence>
<reference key="1">
    <citation type="journal article" date="1999" name="DNA Res.">
        <title>Structural analysis of Arabidopsis thaliana chromosome 5. IX. Sequence features of the regions of 1,011,550 bp covered by seventeen P1 and TAC clones.</title>
        <authorList>
            <person name="Kaneko T."/>
            <person name="Katoh T."/>
            <person name="Sato S."/>
            <person name="Nakamura Y."/>
            <person name="Asamizu E."/>
            <person name="Kotani H."/>
            <person name="Miyajima N."/>
            <person name="Tabata S."/>
        </authorList>
    </citation>
    <scope>NUCLEOTIDE SEQUENCE [LARGE SCALE GENOMIC DNA]</scope>
    <source>
        <strain>cv. Columbia</strain>
    </source>
</reference>
<reference key="2">
    <citation type="journal article" date="2017" name="Plant J.">
        <title>Araport11: a complete reannotation of the Arabidopsis thaliana reference genome.</title>
        <authorList>
            <person name="Cheng C.Y."/>
            <person name="Krishnakumar V."/>
            <person name="Chan A.P."/>
            <person name="Thibaud-Nissen F."/>
            <person name="Schobel S."/>
            <person name="Town C.D."/>
        </authorList>
    </citation>
    <scope>GENOME REANNOTATION</scope>
    <source>
        <strain>cv. Columbia</strain>
    </source>
</reference>
<reference key="3">
    <citation type="journal article" date="2003" name="Science">
        <title>Empirical analysis of transcriptional activity in the Arabidopsis genome.</title>
        <authorList>
            <person name="Yamada K."/>
            <person name="Lim J."/>
            <person name="Dale J.M."/>
            <person name="Chen H."/>
            <person name="Shinn P."/>
            <person name="Palm C.J."/>
            <person name="Southwick A.M."/>
            <person name="Wu H.C."/>
            <person name="Kim C.J."/>
            <person name="Nguyen M."/>
            <person name="Pham P.K."/>
            <person name="Cheuk R.F."/>
            <person name="Karlin-Newmann G."/>
            <person name="Liu S.X."/>
            <person name="Lam B."/>
            <person name="Sakano H."/>
            <person name="Wu T."/>
            <person name="Yu G."/>
            <person name="Miranda M."/>
            <person name="Quach H.L."/>
            <person name="Tripp M."/>
            <person name="Chang C.H."/>
            <person name="Lee J.M."/>
            <person name="Toriumi M.J."/>
            <person name="Chan M.M."/>
            <person name="Tang C.C."/>
            <person name="Onodera C.S."/>
            <person name="Deng J.M."/>
            <person name="Akiyama K."/>
            <person name="Ansari Y."/>
            <person name="Arakawa T."/>
            <person name="Banh J."/>
            <person name="Banno F."/>
            <person name="Bowser L."/>
            <person name="Brooks S.Y."/>
            <person name="Carninci P."/>
            <person name="Chao Q."/>
            <person name="Choy N."/>
            <person name="Enju A."/>
            <person name="Goldsmith A.D."/>
            <person name="Gurjal M."/>
            <person name="Hansen N.F."/>
            <person name="Hayashizaki Y."/>
            <person name="Johnson-Hopson C."/>
            <person name="Hsuan V.W."/>
            <person name="Iida K."/>
            <person name="Karnes M."/>
            <person name="Khan S."/>
            <person name="Koesema E."/>
            <person name="Ishida J."/>
            <person name="Jiang P.X."/>
            <person name="Jones T."/>
            <person name="Kawai J."/>
            <person name="Kamiya A."/>
            <person name="Meyers C."/>
            <person name="Nakajima M."/>
            <person name="Narusaka M."/>
            <person name="Seki M."/>
            <person name="Sakurai T."/>
            <person name="Satou M."/>
            <person name="Tamse R."/>
            <person name="Vaysberg M."/>
            <person name="Wallender E.K."/>
            <person name="Wong C."/>
            <person name="Yamamura Y."/>
            <person name="Yuan S."/>
            <person name="Shinozaki K."/>
            <person name="Davis R.W."/>
            <person name="Theologis A."/>
            <person name="Ecker J.R."/>
        </authorList>
    </citation>
    <scope>NUCLEOTIDE SEQUENCE [LARGE SCALE MRNA] (ISOFORM 1)</scope>
    <source>
        <strain>cv. Columbia</strain>
    </source>
</reference>
<reference key="4">
    <citation type="journal article" date="2009" name="DNA Res.">
        <title>Analysis of multiple occurrences of alternative splicing events in Arabidopsis thaliana using novel sequenced full-length cDNAs.</title>
        <authorList>
            <person name="Iida K."/>
            <person name="Fukami-Kobayashi K."/>
            <person name="Toyoda A."/>
            <person name="Sakaki Y."/>
            <person name="Kobayashi M."/>
            <person name="Seki M."/>
            <person name="Shinozaki K."/>
        </authorList>
    </citation>
    <scope>NUCLEOTIDE SEQUENCE [LARGE SCALE MRNA] (ISOFORM 2)</scope>
    <source>
        <strain>cv. Columbia</strain>
    </source>
</reference>
<reference key="5">
    <citation type="journal article" date="2005" name="Plant J.">
        <title>Requirement of aminoacyl-tRNA synthetases for gametogenesis and embryo development in Arabidopsis.</title>
        <authorList>
            <person name="Berg M."/>
            <person name="Rogers R."/>
            <person name="Muralla R."/>
            <person name="Meinke D."/>
        </authorList>
    </citation>
    <scope>DISRUPTION PHENOTYPE</scope>
</reference>
<reference key="6">
    <citation type="journal article" date="2005" name="Proc. Natl. Acad. Sci. U.S.A.">
        <title>Dual targeting is the rule for organellar aminoacyl-tRNA synthetases in Arabidopsis thaliana.</title>
        <authorList>
            <person name="Duchene A.-M."/>
            <person name="Giritch A."/>
            <person name="Hoffmann B."/>
            <person name="Cognat V."/>
            <person name="Lancelin D."/>
            <person name="Peeters N.M."/>
            <person name="Zaepfel M."/>
            <person name="Marechal-Drouard L."/>
            <person name="Small I.D."/>
        </authorList>
    </citation>
    <scope>SUBCELLULAR LOCATION</scope>
</reference>
<accession>Q8RXK8</accession>
<accession>B9DF95</accession>
<accession>F4K4Q4</accession>
<accession>Q9FI67</accession>
<dbReference type="EC" id="6.1.1.5" evidence="7"/>
<dbReference type="EMBL" id="AB017061">
    <property type="protein sequence ID" value="BAB10327.1"/>
    <property type="status" value="ALT_SEQ"/>
    <property type="molecule type" value="Genomic_DNA"/>
</dbReference>
<dbReference type="EMBL" id="CP002688">
    <property type="protein sequence ID" value="AED95762.1"/>
    <property type="molecule type" value="Genomic_DNA"/>
</dbReference>
<dbReference type="EMBL" id="CP002688">
    <property type="protein sequence ID" value="AED95763.1"/>
    <property type="molecule type" value="Genomic_DNA"/>
</dbReference>
<dbReference type="EMBL" id="AY080830">
    <property type="protein sequence ID" value="AAL87306.1"/>
    <property type="molecule type" value="mRNA"/>
</dbReference>
<dbReference type="EMBL" id="AY142605">
    <property type="protein sequence ID" value="AAN13174.1"/>
    <property type="molecule type" value="mRNA"/>
</dbReference>
<dbReference type="EMBL" id="AK316685">
    <property type="protein sequence ID" value="BAH19412.1"/>
    <property type="molecule type" value="mRNA"/>
</dbReference>
<dbReference type="RefSeq" id="NP_001032042.1">
    <molecule id="Q8RXK8-2"/>
    <property type="nucleotide sequence ID" value="NM_001036965.2"/>
</dbReference>
<dbReference type="RefSeq" id="NP_199714.2">
    <molecule id="Q8RXK8-1"/>
    <property type="nucleotide sequence ID" value="NM_124280.4"/>
</dbReference>
<dbReference type="SMR" id="Q8RXK8"/>
<dbReference type="FunCoup" id="Q8RXK8">
    <property type="interactions" value="3782"/>
</dbReference>
<dbReference type="STRING" id="3702.Q8RXK8"/>
<dbReference type="iPTMnet" id="Q8RXK8"/>
<dbReference type="PaxDb" id="3702-AT5G49030.3"/>
<dbReference type="ProMEX" id="Q8RXK8"/>
<dbReference type="ProteomicsDB" id="234106">
    <molecule id="Q8RXK8-1"/>
</dbReference>
<dbReference type="EnsemblPlants" id="AT5G49030.1">
    <molecule id="Q8RXK8-1"/>
    <property type="protein sequence ID" value="AT5G49030.1"/>
    <property type="gene ID" value="AT5G49030"/>
</dbReference>
<dbReference type="EnsemblPlants" id="AT5G49030.2">
    <molecule id="Q8RXK8-2"/>
    <property type="protein sequence ID" value="AT5G49030.2"/>
    <property type="gene ID" value="AT5G49030"/>
</dbReference>
<dbReference type="GeneID" id="834962"/>
<dbReference type="Gramene" id="AT5G49030.1">
    <molecule id="Q8RXK8-1"/>
    <property type="protein sequence ID" value="AT5G49030.1"/>
    <property type="gene ID" value="AT5G49030"/>
</dbReference>
<dbReference type="Gramene" id="AT5G49030.2">
    <molecule id="Q8RXK8-2"/>
    <property type="protein sequence ID" value="AT5G49030.2"/>
    <property type="gene ID" value="AT5G49030"/>
</dbReference>
<dbReference type="KEGG" id="ath:AT5G49030"/>
<dbReference type="Araport" id="AT5G49030"/>
<dbReference type="TAIR" id="AT5G49030">
    <property type="gene designation" value="OVA2"/>
</dbReference>
<dbReference type="eggNOG" id="KOG0433">
    <property type="taxonomic scope" value="Eukaryota"/>
</dbReference>
<dbReference type="InParanoid" id="Q8RXK8"/>
<dbReference type="OMA" id="HCWRCKT"/>
<dbReference type="PhylomeDB" id="Q8RXK8"/>
<dbReference type="PRO" id="PR:Q8RXK8"/>
<dbReference type="Proteomes" id="UP000006548">
    <property type="component" value="Chromosome 5"/>
</dbReference>
<dbReference type="ExpressionAtlas" id="Q8RXK8">
    <property type="expression patterns" value="baseline and differential"/>
</dbReference>
<dbReference type="GO" id="GO:0009507">
    <property type="term" value="C:chloroplast"/>
    <property type="evidence" value="ECO:0007005"/>
    <property type="project" value="TAIR"/>
</dbReference>
<dbReference type="GO" id="GO:0009570">
    <property type="term" value="C:chloroplast stroma"/>
    <property type="evidence" value="ECO:0007005"/>
    <property type="project" value="TAIR"/>
</dbReference>
<dbReference type="GO" id="GO:0005739">
    <property type="term" value="C:mitochondrion"/>
    <property type="evidence" value="ECO:0007669"/>
    <property type="project" value="UniProtKB-SubCell"/>
</dbReference>
<dbReference type="GO" id="GO:0002161">
    <property type="term" value="F:aminoacyl-tRNA deacylase activity"/>
    <property type="evidence" value="ECO:0007669"/>
    <property type="project" value="InterPro"/>
</dbReference>
<dbReference type="GO" id="GO:0005524">
    <property type="term" value="F:ATP binding"/>
    <property type="evidence" value="ECO:0007669"/>
    <property type="project" value="UniProtKB-KW"/>
</dbReference>
<dbReference type="GO" id="GO:0004822">
    <property type="term" value="F:isoleucine-tRNA ligase activity"/>
    <property type="evidence" value="ECO:0007669"/>
    <property type="project" value="UniProtKB-EC"/>
</dbReference>
<dbReference type="GO" id="GO:0046872">
    <property type="term" value="F:metal ion binding"/>
    <property type="evidence" value="ECO:0007669"/>
    <property type="project" value="UniProtKB-KW"/>
</dbReference>
<dbReference type="GO" id="GO:0000049">
    <property type="term" value="F:tRNA binding"/>
    <property type="evidence" value="ECO:0007669"/>
    <property type="project" value="InterPro"/>
</dbReference>
<dbReference type="GO" id="GO:0006428">
    <property type="term" value="P:isoleucyl-tRNA aminoacylation"/>
    <property type="evidence" value="ECO:0007669"/>
    <property type="project" value="InterPro"/>
</dbReference>
<dbReference type="GO" id="GO:0048481">
    <property type="term" value="P:plant ovule development"/>
    <property type="evidence" value="ECO:0000315"/>
    <property type="project" value="TAIR"/>
</dbReference>
<dbReference type="CDD" id="cd07960">
    <property type="entry name" value="Anticodon_Ia_Ile_BEm"/>
    <property type="match status" value="1"/>
</dbReference>
<dbReference type="CDD" id="cd00818">
    <property type="entry name" value="IleRS_core"/>
    <property type="match status" value="1"/>
</dbReference>
<dbReference type="FunFam" id="1.10.730.20:FF:000001">
    <property type="entry name" value="Isoleucine--tRNA ligase"/>
    <property type="match status" value="1"/>
</dbReference>
<dbReference type="FunFam" id="1.10.10.830:FF:000003">
    <property type="entry name" value="Isoleucine--tRNA ligase, chloroplastic/mitochondrial"/>
    <property type="match status" value="1"/>
</dbReference>
<dbReference type="FunFam" id="3.90.740.10:FF:000013">
    <property type="entry name" value="Isoleucine--tRNA ligase, chloroplastic/mitochondrial"/>
    <property type="match status" value="1"/>
</dbReference>
<dbReference type="FunFam" id="3.40.50.620:FF:000111">
    <property type="entry name" value="Mitochondrial isoleucyl-tRNA synthetase"/>
    <property type="match status" value="1"/>
</dbReference>
<dbReference type="Gene3D" id="1.10.730.20">
    <property type="match status" value="1"/>
</dbReference>
<dbReference type="Gene3D" id="3.40.50.620">
    <property type="entry name" value="HUPs"/>
    <property type="match status" value="2"/>
</dbReference>
<dbReference type="Gene3D" id="1.10.10.830">
    <property type="entry name" value="Ile-tRNA synthetase CP2 domain-like"/>
    <property type="match status" value="1"/>
</dbReference>
<dbReference type="Gene3D" id="3.90.740.10">
    <property type="entry name" value="Valyl/Leucyl/Isoleucyl-tRNA synthetase, editing domain"/>
    <property type="match status" value="1"/>
</dbReference>
<dbReference type="HAMAP" id="MF_02002">
    <property type="entry name" value="Ile_tRNA_synth_type1"/>
    <property type="match status" value="1"/>
</dbReference>
<dbReference type="InterPro" id="IPR001412">
    <property type="entry name" value="aa-tRNA-synth_I_CS"/>
</dbReference>
<dbReference type="InterPro" id="IPR002300">
    <property type="entry name" value="aa-tRNA-synth_Ia"/>
</dbReference>
<dbReference type="InterPro" id="IPR033708">
    <property type="entry name" value="Anticodon_Ile_BEm"/>
</dbReference>
<dbReference type="InterPro" id="IPR002301">
    <property type="entry name" value="Ile-tRNA-ligase"/>
</dbReference>
<dbReference type="InterPro" id="IPR023585">
    <property type="entry name" value="Ile-tRNA-ligase_type1"/>
</dbReference>
<dbReference type="InterPro" id="IPR050081">
    <property type="entry name" value="Ile-tRNA_ligase"/>
</dbReference>
<dbReference type="InterPro" id="IPR013155">
    <property type="entry name" value="M/V/L/I-tRNA-synth_anticd-bd"/>
</dbReference>
<dbReference type="InterPro" id="IPR014729">
    <property type="entry name" value="Rossmann-like_a/b/a_fold"/>
</dbReference>
<dbReference type="InterPro" id="IPR009080">
    <property type="entry name" value="tRNAsynth_Ia_anticodon-bd"/>
</dbReference>
<dbReference type="InterPro" id="IPR009008">
    <property type="entry name" value="Val/Leu/Ile-tRNA-synth_edit"/>
</dbReference>
<dbReference type="InterPro" id="IPR010663">
    <property type="entry name" value="Znf_FPG/IleRS"/>
</dbReference>
<dbReference type="NCBIfam" id="TIGR00392">
    <property type="entry name" value="ileS"/>
    <property type="match status" value="1"/>
</dbReference>
<dbReference type="PANTHER" id="PTHR42765:SF1">
    <property type="entry name" value="ISOLEUCINE--TRNA LIGASE, MITOCHONDRIAL"/>
    <property type="match status" value="1"/>
</dbReference>
<dbReference type="PANTHER" id="PTHR42765">
    <property type="entry name" value="SOLEUCYL-TRNA SYNTHETASE"/>
    <property type="match status" value="1"/>
</dbReference>
<dbReference type="Pfam" id="PF08264">
    <property type="entry name" value="Anticodon_1"/>
    <property type="match status" value="1"/>
</dbReference>
<dbReference type="Pfam" id="PF00133">
    <property type="entry name" value="tRNA-synt_1"/>
    <property type="match status" value="1"/>
</dbReference>
<dbReference type="Pfam" id="PF06827">
    <property type="entry name" value="zf-FPG_IleRS"/>
    <property type="match status" value="1"/>
</dbReference>
<dbReference type="PRINTS" id="PR00984">
    <property type="entry name" value="TRNASYNTHILE"/>
</dbReference>
<dbReference type="SUPFAM" id="SSF47323">
    <property type="entry name" value="Anticodon-binding domain of a subclass of class I aminoacyl-tRNA synthetases"/>
    <property type="match status" value="1"/>
</dbReference>
<dbReference type="SUPFAM" id="SSF52374">
    <property type="entry name" value="Nucleotidylyl transferase"/>
    <property type="match status" value="1"/>
</dbReference>
<dbReference type="SUPFAM" id="SSF50677">
    <property type="entry name" value="ValRS/IleRS/LeuRS editing domain"/>
    <property type="match status" value="1"/>
</dbReference>
<dbReference type="PROSITE" id="PS00178">
    <property type="entry name" value="AA_TRNA_LIGASE_I"/>
    <property type="match status" value="1"/>
</dbReference>
<name>SYIM_ARATH</name>
<comment type="catalytic activity">
    <reaction evidence="7">
        <text>tRNA(Ile) + L-isoleucine + ATP = L-isoleucyl-tRNA(Ile) + AMP + diphosphate</text>
        <dbReference type="Rhea" id="RHEA:11060"/>
        <dbReference type="Rhea" id="RHEA-COMP:9666"/>
        <dbReference type="Rhea" id="RHEA-COMP:9695"/>
        <dbReference type="ChEBI" id="CHEBI:30616"/>
        <dbReference type="ChEBI" id="CHEBI:33019"/>
        <dbReference type="ChEBI" id="CHEBI:58045"/>
        <dbReference type="ChEBI" id="CHEBI:78442"/>
        <dbReference type="ChEBI" id="CHEBI:78528"/>
        <dbReference type="ChEBI" id="CHEBI:456215"/>
        <dbReference type="EC" id="6.1.1.5"/>
    </reaction>
</comment>
<comment type="subcellular location">
    <subcellularLocation>
        <location evidence="4">Plastid</location>
        <location evidence="4">Chloroplast</location>
    </subcellularLocation>
    <subcellularLocation>
        <location evidence="4">Mitochondrion</location>
    </subcellularLocation>
</comment>
<comment type="alternative products">
    <event type="alternative splicing"/>
    <isoform>
        <id>Q8RXK8-1</id>
        <name>1</name>
        <sequence type="displayed"/>
    </isoform>
    <isoform>
        <id>Q8RXK8-2</id>
        <name>2</name>
        <sequence type="described" ref="VSP_057806 VSP_057807"/>
    </isoform>
</comment>
<comment type="disruption phenotype">
    <text evidence="5">Lethal. In heterozygous plants, aborted ovules.</text>
</comment>
<comment type="similarity">
    <text evidence="7">Belongs to the class-I aminoacyl-tRNA synthetase family.</text>
</comment>
<comment type="sequence caution" evidence="7">
    <conflict type="erroneous gene model prediction">
        <sequence resource="EMBL-CDS" id="BAB10327"/>
    </conflict>
</comment>
<protein>
    <recommendedName>
        <fullName evidence="7">Isoleucine--tRNA ligase, chloroplastic/mitochondrial</fullName>
        <ecNumber evidence="7">6.1.1.5</ecNumber>
    </recommendedName>
    <alternativeName>
        <fullName evidence="7">Isoleucyl-tRNA synthetase</fullName>
        <shortName evidence="7">IleRS</shortName>
    </alternativeName>
    <alternativeName>
        <fullName evidence="6">Protein OVULE ABORTION 2</fullName>
    </alternativeName>
</protein>
<gene>
    <name evidence="6" type="primary">OVA2</name>
    <name evidence="8" type="ordered locus">At5g49030</name>
    <name evidence="9" type="ORF">K19E20.18</name>
</gene>
<keyword id="KW-0025">Alternative splicing</keyword>
<keyword id="KW-0030">Aminoacyl-tRNA synthetase</keyword>
<keyword id="KW-0067">ATP-binding</keyword>
<keyword id="KW-0150">Chloroplast</keyword>
<keyword id="KW-0436">Ligase</keyword>
<keyword id="KW-0479">Metal-binding</keyword>
<keyword id="KW-0496">Mitochondrion</keyword>
<keyword id="KW-0547">Nucleotide-binding</keyword>
<keyword id="KW-0934">Plastid</keyword>
<keyword id="KW-0648">Protein biosynthesis</keyword>
<keyword id="KW-1185">Reference proteome</keyword>
<keyword id="KW-0809">Transit peptide</keyword>
<keyword id="KW-0862">Zinc</keyword>